<organism>
    <name type="scientific">Macaca fascicularis</name>
    <name type="common">Crab-eating macaque</name>
    <name type="synonym">Cynomolgus monkey</name>
    <dbReference type="NCBI Taxonomy" id="9541"/>
    <lineage>
        <taxon>Eukaryota</taxon>
        <taxon>Metazoa</taxon>
        <taxon>Chordata</taxon>
        <taxon>Craniata</taxon>
        <taxon>Vertebrata</taxon>
        <taxon>Euteleostomi</taxon>
        <taxon>Mammalia</taxon>
        <taxon>Eutheria</taxon>
        <taxon>Euarchontoglires</taxon>
        <taxon>Primates</taxon>
        <taxon>Haplorrhini</taxon>
        <taxon>Catarrhini</taxon>
        <taxon>Cercopithecidae</taxon>
        <taxon>Cercopithecinae</taxon>
        <taxon>Macaca</taxon>
    </lineage>
</organism>
<name>DNJB6_MACFA</name>
<feature type="chain" id="PRO_0000292339" description="DnaJ homolog subfamily B member 6">
    <location>
        <begin position="1"/>
        <end position="241"/>
    </location>
</feature>
<feature type="domain" description="J" evidence="3">
    <location>
        <begin position="3"/>
        <end position="69"/>
    </location>
</feature>
<feature type="region of interest" description="Interaction with HSP70" evidence="2">
    <location>
        <begin position="2"/>
        <end position="146"/>
    </location>
</feature>
<feature type="region of interest" description="Interaction with KRT18" evidence="2">
    <location>
        <begin position="119"/>
        <end position="241"/>
    </location>
</feature>
<feature type="modified residue" description="Omega-N-methylarginine" evidence="1">
    <location>
        <position position="135"/>
    </location>
</feature>
<evidence type="ECO:0000250" key="1">
    <source>
        <dbReference type="UniProtKB" id="O54946"/>
    </source>
</evidence>
<evidence type="ECO:0000250" key="2">
    <source>
        <dbReference type="UniProtKB" id="O75190"/>
    </source>
</evidence>
<evidence type="ECO:0000255" key="3">
    <source>
        <dbReference type="PROSITE-ProRule" id="PRU00286"/>
    </source>
</evidence>
<evidence type="ECO:0000269" key="4">
    <source ref="1"/>
</evidence>
<evidence type="ECO:0000312" key="5">
    <source>
        <dbReference type="EMBL" id="BAE00787.1"/>
    </source>
</evidence>
<protein>
    <recommendedName>
        <fullName>DnaJ homolog subfamily B member 6</fullName>
    </recommendedName>
</protein>
<dbReference type="EMBL" id="AB168676">
    <property type="protein sequence ID" value="BAE00787.1"/>
    <property type="molecule type" value="mRNA"/>
</dbReference>
<dbReference type="SMR" id="Q4R7Y5"/>
<dbReference type="STRING" id="9541.ENSMFAP00000031198"/>
<dbReference type="Ensembl" id="ENSMFAT00000101818.1">
    <property type="protein sequence ID" value="ENSMFAP00000047153.1"/>
    <property type="gene ID" value="ENSMFAG00000036682.2"/>
</dbReference>
<dbReference type="eggNOG" id="KOG0714">
    <property type="taxonomic scope" value="Eukaryota"/>
</dbReference>
<dbReference type="GeneTree" id="ENSGT00940000154205"/>
<dbReference type="Proteomes" id="UP000233100">
    <property type="component" value="Chromosome 3"/>
</dbReference>
<dbReference type="Bgee" id="ENSMFAG00000036682">
    <property type="expression patterns" value="Expressed in skeletal muscle tissue and 13 other cell types or tissues"/>
</dbReference>
<dbReference type="GO" id="GO:0005634">
    <property type="term" value="C:nucleus"/>
    <property type="evidence" value="ECO:0007669"/>
    <property type="project" value="UniProtKB-SubCell"/>
</dbReference>
<dbReference type="GO" id="GO:0048471">
    <property type="term" value="C:perinuclear region of cytoplasm"/>
    <property type="evidence" value="ECO:0007669"/>
    <property type="project" value="UniProtKB-SubCell"/>
</dbReference>
<dbReference type="GO" id="GO:0030018">
    <property type="term" value="C:Z disc"/>
    <property type="evidence" value="ECO:0000250"/>
    <property type="project" value="UniProtKB"/>
</dbReference>
<dbReference type="GO" id="GO:0030544">
    <property type="term" value="F:Hsp70 protein binding"/>
    <property type="evidence" value="ECO:0007669"/>
    <property type="project" value="InterPro"/>
</dbReference>
<dbReference type="GO" id="GO:0051082">
    <property type="term" value="F:unfolded protein binding"/>
    <property type="evidence" value="ECO:0007669"/>
    <property type="project" value="InterPro"/>
</dbReference>
<dbReference type="GO" id="GO:0061077">
    <property type="term" value="P:chaperone-mediated protein folding"/>
    <property type="evidence" value="ECO:0007669"/>
    <property type="project" value="InterPro"/>
</dbReference>
<dbReference type="CDD" id="cd06257">
    <property type="entry name" value="DnaJ"/>
    <property type="match status" value="1"/>
</dbReference>
<dbReference type="FunFam" id="1.10.287.110:FF:000022">
    <property type="entry name" value="DnaJ homolog subfamily B member 6"/>
    <property type="match status" value="1"/>
</dbReference>
<dbReference type="Gene3D" id="1.10.287.110">
    <property type="entry name" value="DnaJ domain"/>
    <property type="match status" value="1"/>
</dbReference>
<dbReference type="InterPro" id="IPR001623">
    <property type="entry name" value="DnaJ_domain"/>
</dbReference>
<dbReference type="InterPro" id="IPR018253">
    <property type="entry name" value="DnaJ_domain_CS"/>
</dbReference>
<dbReference type="InterPro" id="IPR043183">
    <property type="entry name" value="DNJB2/6-like"/>
</dbReference>
<dbReference type="InterPro" id="IPR036869">
    <property type="entry name" value="J_dom_sf"/>
</dbReference>
<dbReference type="PANTHER" id="PTHR45168">
    <property type="entry name" value="DNAJ HOMOLOG SUBFAMILY B MEMBER 2"/>
    <property type="match status" value="1"/>
</dbReference>
<dbReference type="PANTHER" id="PTHR45168:SF4">
    <property type="entry name" value="SIMILAR TO DNAJ HOMOLOG SUBFAMILY B MEMBER 6 (HEAT SHOCK PROTEIN J2) (HSJ-2) (MRJ) (MDJ4)"/>
    <property type="match status" value="1"/>
</dbReference>
<dbReference type="Pfam" id="PF00226">
    <property type="entry name" value="DnaJ"/>
    <property type="match status" value="1"/>
</dbReference>
<dbReference type="PRINTS" id="PR00625">
    <property type="entry name" value="JDOMAIN"/>
</dbReference>
<dbReference type="SMART" id="SM00271">
    <property type="entry name" value="DnaJ"/>
    <property type="match status" value="1"/>
</dbReference>
<dbReference type="SUPFAM" id="SSF46565">
    <property type="entry name" value="Chaperone J-domain"/>
    <property type="match status" value="1"/>
</dbReference>
<dbReference type="PROSITE" id="PS00636">
    <property type="entry name" value="DNAJ_1"/>
    <property type="match status" value="1"/>
</dbReference>
<dbReference type="PROSITE" id="PS50076">
    <property type="entry name" value="DNAJ_2"/>
    <property type="match status" value="1"/>
</dbReference>
<proteinExistence type="evidence at transcript level"/>
<sequence>MVDYYEVLGVQRHASPEDIKKAYRKLALKWHPDKNPENKEEAERKFKQVAEAYEVLSDAKKRDIYDKYGKEGLNGGGGGGSHFDSPFEFGFTFRNPDDVFREFFGGRDPFSFEFFEDPFEDFFGNRRGPRGSRSRGTGSFFSAFSGFPSFGSGFSSFDTGFTSFGSLGHGGLTSFSSTSFGGGGMGNFKSISTSTKMVNGRKITTKRIVENGQERVEVEEDGQLKSLTINGKEQLLRLDNK</sequence>
<keyword id="KW-0143">Chaperone</keyword>
<keyword id="KW-0963">Cytoplasm</keyword>
<keyword id="KW-0488">Methylation</keyword>
<keyword id="KW-0539">Nucleus</keyword>
<keyword id="KW-1185">Reference proteome</keyword>
<reference evidence="5" key="1">
    <citation type="submission" date="2005-06" db="EMBL/GenBank/DDBJ databases">
        <title>DNA sequences of macaque genes expressed in brain or testis and its evolutionary implications.</title>
        <authorList>
            <consortium name="International consortium for macaque cDNA sequencing and analysis"/>
        </authorList>
    </citation>
    <scope>NUCLEOTIDE SEQUENCE [LARGE SCALE MRNA]</scope>
    <source>
        <tissue evidence="4">Testis</tissue>
    </source>
</reference>
<gene>
    <name evidence="2" type="primary">DNAJB6</name>
    <name type="ORF">QtsA-14076</name>
</gene>
<comment type="function">
    <text evidence="2">Has a stimulatory effect on the ATPase activity of HSP70 in a dose-dependent and time-dependent manner and hence acts as a co-chaperone of HSP70. Plays an indispensable role in the organization of KRT8/KRT18 filaments. Acts as an endogenous molecular chaperone for neuronal proteins including huntingtin. Suppresses aggregation and toxicity of polyglutamine-containing, aggregation-prone proteins. Also reduces cellular toxicity and caspase-3 activity.</text>
</comment>
<comment type="subunit">
    <text evidence="1 2">Homooligomer. Interacts with BAG3, HSPB8 and STUB1 (By similarity). Interacts with ALKBH1 (By similarity). Interacts with HSP70, KRT18 and PTTG (By similarity).</text>
</comment>
<comment type="subcellular location">
    <subcellularLocation>
        <location evidence="2">Cytoplasm</location>
        <location evidence="2">Perinuclear region</location>
    </subcellularLocation>
    <subcellularLocation>
        <location evidence="2">Nucleus</location>
    </subcellularLocation>
    <subcellularLocation>
        <location evidence="2">Cytoplasm</location>
        <location evidence="2">Myofibril</location>
        <location evidence="2">Sarcomere</location>
        <location evidence="2">Z line</location>
    </subcellularLocation>
</comment>
<accession>Q4R7Y5</accession>